<protein>
    <recommendedName>
        <fullName>Probable chromosome 2-partitioning protein ParB</fullName>
    </recommendedName>
    <alternativeName>
        <fullName>Probable chromosome II-partitioning protein ParB</fullName>
    </alternativeName>
</protein>
<sequence>MTRRRPERRRDLLGLLGETPVDLSQANDIRALPVNELKVGSTQPRRSFDLERLSELAESIRAHGVLQPLLVRSVDGQYEIVAGERRWRAAQLAGLAEVPVVVRQLSNEQARAAALIENLQRDNLNVIDEVDGKLELIALTLGLEREEARKRLMQLLRAVPGDEHEQLDQVFRSMGETWRTFAKNKLRILNWPQPVLEALRAGLPLTLGSVVASAPPERQAELLKLAQNGASRSQLLQALQTPSQTSAVTPEHFAKVLSSKRFLSGLDTPTREALDRWLARMPERVRQAIDEQS</sequence>
<keyword id="KW-0159">Chromosome partition</keyword>
<keyword id="KW-0238">DNA-binding</keyword>
<keyword id="KW-1185">Reference proteome</keyword>
<feature type="chain" id="PRO_0000178681" description="Probable chromosome 2-partitioning protein ParB">
    <location>
        <begin position="1"/>
        <end position="293"/>
    </location>
</feature>
<name>PARB2_DEIRA</name>
<reference key="1">
    <citation type="journal article" date="1999" name="Science">
        <title>Genome sequence of the radioresistant bacterium Deinococcus radiodurans R1.</title>
        <authorList>
            <person name="White O."/>
            <person name="Eisen J.A."/>
            <person name="Heidelberg J.F."/>
            <person name="Hickey E.K."/>
            <person name="Peterson J.D."/>
            <person name="Dodson R.J."/>
            <person name="Haft D.H."/>
            <person name="Gwinn M.L."/>
            <person name="Nelson W.C."/>
            <person name="Richardson D.L."/>
            <person name="Moffat K.S."/>
            <person name="Qin H."/>
            <person name="Jiang L."/>
            <person name="Pamphile W."/>
            <person name="Crosby M."/>
            <person name="Shen M."/>
            <person name="Vamathevan J.J."/>
            <person name="Lam P."/>
            <person name="McDonald L.A."/>
            <person name="Utterback T.R."/>
            <person name="Zalewski C."/>
            <person name="Makarova K.S."/>
            <person name="Aravind L."/>
            <person name="Daly M.J."/>
            <person name="Minton K.W."/>
            <person name="Fleischmann R.D."/>
            <person name="Ketchum K.A."/>
            <person name="Nelson K.E."/>
            <person name="Salzberg S.L."/>
            <person name="Smith H.O."/>
            <person name="Venter J.C."/>
            <person name="Fraser C.M."/>
        </authorList>
    </citation>
    <scope>NUCLEOTIDE SEQUENCE [LARGE SCALE GENOMIC DNA]</scope>
    <source>
        <strain>ATCC 13939 / DSM 20539 / JCM 16871 / CCUG 27074 / LMG 4051 / NBRC 15346 / NCIMB 9279 / VKM B-1422 / R1</strain>
    </source>
</reference>
<gene>
    <name type="primary">parB2</name>
    <name type="ordered locus">DR_A0002</name>
</gene>
<organism>
    <name type="scientific">Deinococcus radiodurans (strain ATCC 13939 / DSM 20539 / JCM 16871 / CCUG 27074 / LMG 4051 / NBRC 15346 / NCIMB 9279 / VKM B-1422 / R1)</name>
    <dbReference type="NCBI Taxonomy" id="243230"/>
    <lineage>
        <taxon>Bacteria</taxon>
        <taxon>Thermotogati</taxon>
        <taxon>Deinococcota</taxon>
        <taxon>Deinococci</taxon>
        <taxon>Deinococcales</taxon>
        <taxon>Deinococcaceae</taxon>
        <taxon>Deinococcus</taxon>
    </lineage>
</organism>
<comment type="function">
    <text evidence="1">Involved in chromosome partition. Localize to both poles of the predivisional cell following completion of DNA replication. Binds to the DNA origin of replication (By similarity).</text>
</comment>
<comment type="similarity">
    <text evidence="2">Belongs to the ParB family.</text>
</comment>
<proteinExistence type="inferred from homology"/>
<evidence type="ECO:0000250" key="1"/>
<evidence type="ECO:0000305" key="2"/>
<accession>Q9RZE7</accession>
<dbReference type="EMBL" id="AE001825">
    <property type="protein sequence ID" value="AAF12300.1"/>
    <property type="molecule type" value="Genomic_DNA"/>
</dbReference>
<dbReference type="PIR" id="F75592">
    <property type="entry name" value="F75592"/>
</dbReference>
<dbReference type="RefSeq" id="NP_285326.1">
    <property type="nucleotide sequence ID" value="NC_001264.1"/>
</dbReference>
<dbReference type="RefSeq" id="WP_010889262.1">
    <property type="nucleotide sequence ID" value="NC_001264.1"/>
</dbReference>
<dbReference type="SMR" id="Q9RZE7"/>
<dbReference type="STRING" id="243230.DR_A0002"/>
<dbReference type="PaxDb" id="243230-DR_A0002"/>
<dbReference type="EnsemblBacteria" id="AAF12300">
    <property type="protein sequence ID" value="AAF12300"/>
    <property type="gene ID" value="DR_A0002"/>
</dbReference>
<dbReference type="GeneID" id="69518895"/>
<dbReference type="KEGG" id="dra:DR_A0002"/>
<dbReference type="eggNOG" id="COG1475">
    <property type="taxonomic scope" value="Bacteria"/>
</dbReference>
<dbReference type="HOGENOM" id="CLU_023853_4_0_0"/>
<dbReference type="InParanoid" id="Q9RZE7"/>
<dbReference type="OrthoDB" id="61260at2"/>
<dbReference type="Proteomes" id="UP000002524">
    <property type="component" value="Chromosome 2"/>
</dbReference>
<dbReference type="GO" id="GO:0005694">
    <property type="term" value="C:chromosome"/>
    <property type="evidence" value="ECO:0000318"/>
    <property type="project" value="GO_Central"/>
</dbReference>
<dbReference type="GO" id="GO:0003677">
    <property type="term" value="F:DNA binding"/>
    <property type="evidence" value="ECO:0007669"/>
    <property type="project" value="UniProtKB-KW"/>
</dbReference>
<dbReference type="GO" id="GO:0007059">
    <property type="term" value="P:chromosome segregation"/>
    <property type="evidence" value="ECO:0000318"/>
    <property type="project" value="GO_Central"/>
</dbReference>
<dbReference type="CDD" id="cd16393">
    <property type="entry name" value="SPO0J_N"/>
    <property type="match status" value="1"/>
</dbReference>
<dbReference type="FunFam" id="3.90.1530.30:FF:000001">
    <property type="entry name" value="Chromosome partitioning protein ParB"/>
    <property type="match status" value="1"/>
</dbReference>
<dbReference type="FunFam" id="1.10.10.2830:FF:000003">
    <property type="entry name" value="Probable chromosome 2-partitioning protein ParB"/>
    <property type="match status" value="1"/>
</dbReference>
<dbReference type="Gene3D" id="1.10.10.2830">
    <property type="match status" value="1"/>
</dbReference>
<dbReference type="Gene3D" id="3.90.1530.30">
    <property type="match status" value="1"/>
</dbReference>
<dbReference type="InterPro" id="IPR050336">
    <property type="entry name" value="Chromosome_partition/occlusion"/>
</dbReference>
<dbReference type="InterPro" id="IPR004437">
    <property type="entry name" value="ParB/RepB/Spo0J"/>
</dbReference>
<dbReference type="InterPro" id="IPR003115">
    <property type="entry name" value="ParB/Sulfiredoxin_dom"/>
</dbReference>
<dbReference type="InterPro" id="IPR036086">
    <property type="entry name" value="ParB/Sulfiredoxin_sf"/>
</dbReference>
<dbReference type="NCBIfam" id="TIGR00180">
    <property type="entry name" value="parB_part"/>
    <property type="match status" value="1"/>
</dbReference>
<dbReference type="PANTHER" id="PTHR33375:SF7">
    <property type="entry name" value="CHROMOSOME 2-PARTITIONING PROTEIN PARB-RELATED"/>
    <property type="match status" value="1"/>
</dbReference>
<dbReference type="PANTHER" id="PTHR33375">
    <property type="entry name" value="CHROMOSOME-PARTITIONING PROTEIN PARB-RELATED"/>
    <property type="match status" value="1"/>
</dbReference>
<dbReference type="Pfam" id="PF02195">
    <property type="entry name" value="ParBc"/>
    <property type="match status" value="1"/>
</dbReference>
<dbReference type="SMART" id="SM00470">
    <property type="entry name" value="ParB"/>
    <property type="match status" value="1"/>
</dbReference>
<dbReference type="SUPFAM" id="SSF109709">
    <property type="entry name" value="KorB DNA-binding domain-like"/>
    <property type="match status" value="1"/>
</dbReference>
<dbReference type="SUPFAM" id="SSF110849">
    <property type="entry name" value="ParB/Sulfiredoxin"/>
    <property type="match status" value="1"/>
</dbReference>